<reference key="1">
    <citation type="journal article" date="2009" name="Proc. Natl. Acad. Sci. U.S.A.">
        <title>Biogeography of the Sulfolobus islandicus pan-genome.</title>
        <authorList>
            <person name="Reno M.L."/>
            <person name="Held N.L."/>
            <person name="Fields C.J."/>
            <person name="Burke P.V."/>
            <person name="Whitaker R.J."/>
        </authorList>
    </citation>
    <scope>NUCLEOTIDE SEQUENCE [LARGE SCALE GENOMIC DNA]</scope>
    <source>
        <strain>Y.G.57.14 / Yellowstone #1</strain>
    </source>
</reference>
<keyword id="KW-0012">Acyltransferase</keyword>
<keyword id="KW-0963">Cytoplasm</keyword>
<keyword id="KW-0408">Iron</keyword>
<keyword id="KW-0479">Metal-binding</keyword>
<keyword id="KW-0808">Transferase</keyword>
<keyword id="KW-0819">tRNA processing</keyword>
<comment type="function">
    <text evidence="1">Required for the formation of a threonylcarbamoyl group on adenosine at position 37 (t(6)A37) in tRNAs that read codons beginning with adenine. Is probably involved in the transfer of the threonylcarbamoyl moiety of threonylcarbamoyl-AMP (TC-AMP) to the N6 group of A37.</text>
</comment>
<comment type="catalytic activity">
    <reaction evidence="1">
        <text>L-threonylcarbamoyladenylate + adenosine(37) in tRNA = N(6)-L-threonylcarbamoyladenosine(37) in tRNA + AMP + H(+)</text>
        <dbReference type="Rhea" id="RHEA:37059"/>
        <dbReference type="Rhea" id="RHEA-COMP:10162"/>
        <dbReference type="Rhea" id="RHEA-COMP:10163"/>
        <dbReference type="ChEBI" id="CHEBI:15378"/>
        <dbReference type="ChEBI" id="CHEBI:73682"/>
        <dbReference type="ChEBI" id="CHEBI:74411"/>
        <dbReference type="ChEBI" id="CHEBI:74418"/>
        <dbReference type="ChEBI" id="CHEBI:456215"/>
        <dbReference type="EC" id="2.3.1.234"/>
    </reaction>
</comment>
<comment type="cofactor">
    <cofactor evidence="1">
        <name>Fe(2+)</name>
        <dbReference type="ChEBI" id="CHEBI:29033"/>
    </cofactor>
    <text evidence="1">Binds 1 Fe(2+) ion per subunit.</text>
</comment>
<comment type="subcellular location">
    <subcellularLocation>
        <location evidence="1">Cytoplasm</location>
    </subcellularLocation>
</comment>
<comment type="similarity">
    <text evidence="1">Belongs to the KAE1 / TsaD family.</text>
</comment>
<organism>
    <name type="scientific">Saccharolobus islandicus (strain Y.G.57.14 / Yellowstone #1)</name>
    <name type="common">Sulfolobus islandicus</name>
    <dbReference type="NCBI Taxonomy" id="439386"/>
    <lineage>
        <taxon>Archaea</taxon>
        <taxon>Thermoproteota</taxon>
        <taxon>Thermoprotei</taxon>
        <taxon>Sulfolobales</taxon>
        <taxon>Sulfolobaceae</taxon>
        <taxon>Saccharolobus</taxon>
    </lineage>
</organism>
<accession>C3N752</accession>
<gene>
    <name evidence="1" type="primary">kae1</name>
    <name type="ordered locus">YG5714_1789</name>
</gene>
<feature type="chain" id="PRO_1000215318" description="tRNA N6-adenosine threonylcarbamoyltransferase">
    <location>
        <begin position="1"/>
        <end position="331"/>
    </location>
</feature>
<feature type="binding site" evidence="1">
    <location>
        <position position="109"/>
    </location>
    <ligand>
        <name>Fe cation</name>
        <dbReference type="ChEBI" id="CHEBI:24875"/>
    </ligand>
</feature>
<feature type="binding site" evidence="1">
    <location>
        <position position="113"/>
    </location>
    <ligand>
        <name>Fe cation</name>
        <dbReference type="ChEBI" id="CHEBI:24875"/>
    </ligand>
</feature>
<feature type="binding site" evidence="1">
    <location>
        <begin position="130"/>
        <end position="134"/>
    </location>
    <ligand>
        <name>substrate</name>
    </ligand>
</feature>
<feature type="binding site" evidence="1">
    <location>
        <position position="130"/>
    </location>
    <ligand>
        <name>Fe cation</name>
        <dbReference type="ChEBI" id="CHEBI:24875"/>
    </ligand>
</feature>
<feature type="binding site" evidence="1">
    <location>
        <position position="162"/>
    </location>
    <ligand>
        <name>substrate</name>
    </ligand>
</feature>
<feature type="binding site" evidence="1">
    <location>
        <position position="183"/>
    </location>
    <ligand>
        <name>substrate</name>
    </ligand>
</feature>
<feature type="binding site" evidence="1">
    <location>
        <position position="262"/>
    </location>
    <ligand>
        <name>substrate</name>
    </ligand>
</feature>
<feature type="binding site" evidence="1">
    <location>
        <position position="290"/>
    </location>
    <ligand>
        <name>Fe cation</name>
        <dbReference type="ChEBI" id="CHEBI:24875"/>
    </ligand>
</feature>
<sequence length="331" mass="36232">MLVLGIESTAHTFGVGIAKDQPPYILANERDTFVPKEGGMKPGDLLKHHAEVSGTILRRALEKANISINDINYIAVALGPGIGPALRVGATLARALSLKYNKKLVPVNHGIGHIEIGYLTTEAKDPLILYLSGGNTIITTFYKGRFRIFGETLDIALGNMMDVFVREVNLAPPYIINGKHAIDICSEKGSKLLKLPYVVKGQDMSFSGLLTAALRLVGKEKLEDICYSIREIAFDMLLEATERALALTSKKELMIVGGVAASVSLRKKLEELGKEWDVQIKIVPPEFAGDNGAMIAYAGMLAASKGVFIDVDKSYIRPRWRVDEVDIPWRN</sequence>
<evidence type="ECO:0000255" key="1">
    <source>
        <dbReference type="HAMAP-Rule" id="MF_01446"/>
    </source>
</evidence>
<protein>
    <recommendedName>
        <fullName evidence="1">tRNA N6-adenosine threonylcarbamoyltransferase</fullName>
        <ecNumber evidence="1">2.3.1.234</ecNumber>
    </recommendedName>
    <alternativeName>
        <fullName evidence="1">N6-L-threonylcarbamoyladenine synthase</fullName>
        <shortName evidence="1">t(6)A synthase</shortName>
    </alternativeName>
    <alternativeName>
        <fullName evidence="1">t(6)A37 threonylcarbamoyladenosine biosynthesis protein Kae1</fullName>
    </alternativeName>
    <alternativeName>
        <fullName evidence="1">tRNA threonylcarbamoyladenosine biosynthesis protein Kae1</fullName>
    </alternativeName>
</protein>
<name>KAE1_SACI7</name>
<proteinExistence type="inferred from homology"/>
<dbReference type="EC" id="2.3.1.234" evidence="1"/>
<dbReference type="EMBL" id="CP001403">
    <property type="protein sequence ID" value="ACP46046.1"/>
    <property type="molecule type" value="Genomic_DNA"/>
</dbReference>
<dbReference type="RefSeq" id="WP_012713903.1">
    <property type="nucleotide sequence ID" value="NC_012622.1"/>
</dbReference>
<dbReference type="SMR" id="C3N752"/>
<dbReference type="GeneID" id="78428708"/>
<dbReference type="KEGG" id="siy:YG5714_1789"/>
<dbReference type="HOGENOM" id="CLU_023208_2_2_2"/>
<dbReference type="Proteomes" id="UP000002308">
    <property type="component" value="Chromosome"/>
</dbReference>
<dbReference type="GO" id="GO:0005737">
    <property type="term" value="C:cytoplasm"/>
    <property type="evidence" value="ECO:0007669"/>
    <property type="project" value="UniProtKB-SubCell"/>
</dbReference>
<dbReference type="GO" id="GO:0000408">
    <property type="term" value="C:EKC/KEOPS complex"/>
    <property type="evidence" value="ECO:0007669"/>
    <property type="project" value="InterPro"/>
</dbReference>
<dbReference type="GO" id="GO:0005506">
    <property type="term" value="F:iron ion binding"/>
    <property type="evidence" value="ECO:0007669"/>
    <property type="project" value="UniProtKB-UniRule"/>
</dbReference>
<dbReference type="GO" id="GO:0061711">
    <property type="term" value="F:N(6)-L-threonylcarbamoyladenine synthase activity"/>
    <property type="evidence" value="ECO:0007669"/>
    <property type="project" value="UniProtKB-EC"/>
</dbReference>
<dbReference type="GO" id="GO:0002949">
    <property type="term" value="P:tRNA threonylcarbamoyladenosine modification"/>
    <property type="evidence" value="ECO:0007669"/>
    <property type="project" value="UniProtKB-UniRule"/>
</dbReference>
<dbReference type="FunFam" id="3.30.420.40:FF:000229">
    <property type="entry name" value="tRNA N6-adenosine threonylcarbamoyltransferase"/>
    <property type="match status" value="1"/>
</dbReference>
<dbReference type="Gene3D" id="3.30.420.40">
    <property type="match status" value="2"/>
</dbReference>
<dbReference type="HAMAP" id="MF_01446">
    <property type="entry name" value="Kae1"/>
    <property type="match status" value="1"/>
</dbReference>
<dbReference type="InterPro" id="IPR043129">
    <property type="entry name" value="ATPase_NBD"/>
</dbReference>
<dbReference type="InterPro" id="IPR000905">
    <property type="entry name" value="Gcp-like_dom"/>
</dbReference>
<dbReference type="InterPro" id="IPR017861">
    <property type="entry name" value="KAE1/TsaD"/>
</dbReference>
<dbReference type="InterPro" id="IPR034680">
    <property type="entry name" value="Kae1_archaea_euk"/>
</dbReference>
<dbReference type="NCBIfam" id="TIGR03722">
    <property type="entry name" value="arch_KAE1"/>
    <property type="match status" value="1"/>
</dbReference>
<dbReference type="NCBIfam" id="TIGR00329">
    <property type="entry name" value="gcp_kae1"/>
    <property type="match status" value="1"/>
</dbReference>
<dbReference type="PANTHER" id="PTHR11735">
    <property type="entry name" value="TRNA N6-ADENOSINE THREONYLCARBAMOYLTRANSFERASE"/>
    <property type="match status" value="1"/>
</dbReference>
<dbReference type="PANTHER" id="PTHR11735:SF14">
    <property type="entry name" value="TRNA N6-ADENOSINE THREONYLCARBAMOYLTRANSFERASE"/>
    <property type="match status" value="1"/>
</dbReference>
<dbReference type="Pfam" id="PF00814">
    <property type="entry name" value="TsaD"/>
    <property type="match status" value="1"/>
</dbReference>
<dbReference type="PRINTS" id="PR00789">
    <property type="entry name" value="OSIALOPTASE"/>
</dbReference>
<dbReference type="SUPFAM" id="SSF53067">
    <property type="entry name" value="Actin-like ATPase domain"/>
    <property type="match status" value="1"/>
</dbReference>